<feature type="chain" id="PRO_0000118435" description="NADH-ubiquinone oxidoreductase chain 4L">
    <location>
        <begin position="1"/>
        <end position="98"/>
    </location>
</feature>
<feature type="transmembrane region" description="Helical" evidence="3">
    <location>
        <begin position="2"/>
        <end position="22"/>
    </location>
</feature>
<feature type="transmembrane region" description="Helical" evidence="3">
    <location>
        <begin position="29"/>
        <end position="49"/>
    </location>
</feature>
<feature type="transmembrane region" description="Helical" evidence="3">
    <location>
        <begin position="61"/>
        <end position="81"/>
    </location>
</feature>
<name>NU4LM_LEMCA</name>
<gene>
    <name type="primary">MT-ND4L</name>
    <name type="synonym">MTND4L</name>
    <name type="synonym">NADH4L</name>
    <name type="synonym">ND4L</name>
</gene>
<dbReference type="EC" id="7.1.1.2"/>
<dbReference type="EMBL" id="AF053684">
    <property type="protein sequence ID" value="AAL18018.1"/>
    <property type="molecule type" value="Genomic_DNA"/>
</dbReference>
<dbReference type="EMBL" id="AF224569">
    <property type="protein sequence ID" value="AAN64755.1"/>
    <property type="molecule type" value="Genomic_DNA"/>
</dbReference>
<dbReference type="EMBL" id="AF224570">
    <property type="protein sequence ID" value="AAN64759.1"/>
    <property type="molecule type" value="Genomic_DNA"/>
</dbReference>
<dbReference type="EMBL" id="AJ421451">
    <property type="protein sequence ID" value="CAD13429.1"/>
    <property type="molecule type" value="Genomic_DNA"/>
</dbReference>
<dbReference type="RefSeq" id="NP_659296.1">
    <property type="nucleotide sequence ID" value="NC_004025.1"/>
</dbReference>
<dbReference type="SMR" id="Q94Y87"/>
<dbReference type="OrthoDB" id="6146597at2759"/>
<dbReference type="GO" id="GO:0005743">
    <property type="term" value="C:mitochondrial inner membrane"/>
    <property type="evidence" value="ECO:0000250"/>
    <property type="project" value="UniProtKB"/>
</dbReference>
<dbReference type="GO" id="GO:0045271">
    <property type="term" value="C:respiratory chain complex I"/>
    <property type="evidence" value="ECO:0000250"/>
    <property type="project" value="UniProtKB"/>
</dbReference>
<dbReference type="GO" id="GO:0008137">
    <property type="term" value="F:NADH dehydrogenase (ubiquinone) activity"/>
    <property type="evidence" value="ECO:0000250"/>
    <property type="project" value="UniProtKB"/>
</dbReference>
<dbReference type="GO" id="GO:0042773">
    <property type="term" value="P:ATP synthesis coupled electron transport"/>
    <property type="evidence" value="ECO:0007669"/>
    <property type="project" value="InterPro"/>
</dbReference>
<dbReference type="FunFam" id="1.10.287.3510:FF:000002">
    <property type="entry name" value="NADH-ubiquinone oxidoreductase chain 4L"/>
    <property type="match status" value="1"/>
</dbReference>
<dbReference type="Gene3D" id="1.10.287.3510">
    <property type="match status" value="1"/>
</dbReference>
<dbReference type="InterPro" id="IPR001133">
    <property type="entry name" value="NADH_UbQ_OxRdtase_chain4L/K"/>
</dbReference>
<dbReference type="InterPro" id="IPR039428">
    <property type="entry name" value="NUOK/Mnh_C1-like"/>
</dbReference>
<dbReference type="PANTHER" id="PTHR11434:SF0">
    <property type="entry name" value="NADH-UBIQUINONE OXIDOREDUCTASE CHAIN 4L"/>
    <property type="match status" value="1"/>
</dbReference>
<dbReference type="PANTHER" id="PTHR11434">
    <property type="entry name" value="NADH-UBIQUINONE OXIDOREDUCTASE SUBUNIT ND4L"/>
    <property type="match status" value="1"/>
</dbReference>
<dbReference type="Pfam" id="PF00420">
    <property type="entry name" value="Oxidored_q2"/>
    <property type="match status" value="1"/>
</dbReference>
<organism>
    <name type="scientific">Lemur catta</name>
    <name type="common">Ring-tailed lemur</name>
    <dbReference type="NCBI Taxonomy" id="9447"/>
    <lineage>
        <taxon>Eukaryota</taxon>
        <taxon>Metazoa</taxon>
        <taxon>Chordata</taxon>
        <taxon>Craniata</taxon>
        <taxon>Vertebrata</taxon>
        <taxon>Euteleostomi</taxon>
        <taxon>Mammalia</taxon>
        <taxon>Eutheria</taxon>
        <taxon>Euarchontoglires</taxon>
        <taxon>Primates</taxon>
        <taxon>Strepsirrhini</taxon>
        <taxon>Lemuriformes</taxon>
        <taxon>Lemuridae</taxon>
        <taxon>Lemur</taxon>
    </lineage>
</organism>
<geneLocation type="mitochondrion"/>
<keyword id="KW-0249">Electron transport</keyword>
<keyword id="KW-0472">Membrane</keyword>
<keyword id="KW-0496">Mitochondrion</keyword>
<keyword id="KW-0999">Mitochondrion inner membrane</keyword>
<keyword id="KW-0520">NAD</keyword>
<keyword id="KW-0679">Respiratory chain</keyword>
<keyword id="KW-1278">Translocase</keyword>
<keyword id="KW-0812">Transmembrane</keyword>
<keyword id="KW-1133">Transmembrane helix</keyword>
<keyword id="KW-0813">Transport</keyword>
<keyword id="KW-0830">Ubiquinone</keyword>
<comment type="function">
    <text evidence="1">Core subunit of the mitochondrial membrane respiratory chain NADH dehydrogenase (Complex I) which catalyzes electron transfer from NADH through the respiratory chain, using ubiquinone as an electron acceptor. Part of the enzyme membrane arm which is embedded in the lipid bilayer and involved in proton translocation.</text>
</comment>
<comment type="catalytic activity">
    <reaction evidence="1">
        <text>a ubiquinone + NADH + 5 H(+)(in) = a ubiquinol + NAD(+) + 4 H(+)(out)</text>
        <dbReference type="Rhea" id="RHEA:29091"/>
        <dbReference type="Rhea" id="RHEA-COMP:9565"/>
        <dbReference type="Rhea" id="RHEA-COMP:9566"/>
        <dbReference type="ChEBI" id="CHEBI:15378"/>
        <dbReference type="ChEBI" id="CHEBI:16389"/>
        <dbReference type="ChEBI" id="CHEBI:17976"/>
        <dbReference type="ChEBI" id="CHEBI:57540"/>
        <dbReference type="ChEBI" id="CHEBI:57945"/>
        <dbReference type="EC" id="7.1.1.2"/>
    </reaction>
    <physiologicalReaction direction="left-to-right" evidence="1">
        <dbReference type="Rhea" id="RHEA:29092"/>
    </physiologicalReaction>
</comment>
<comment type="subunit">
    <text evidence="2">Core subunit of respiratory chain NADH dehydrogenase (Complex I) which is composed of 45 different subunits.</text>
</comment>
<comment type="subcellular location">
    <subcellularLocation>
        <location evidence="2">Mitochondrion inner membrane</location>
        <topology evidence="3">Multi-pass membrane protein</topology>
    </subcellularLocation>
</comment>
<comment type="similarity">
    <text evidence="4">Belongs to the complex I subunit 4L family.</text>
</comment>
<sequence>MPSISTNIILAFITALLGMLIFRSHLMSSLLCLEGMMLSMFILSTLTILSLHFTTSFMMPILLLVFAACEAAVGLALLVTVSNTYGLDYIQNLNLLQC</sequence>
<proteinExistence type="inferred from homology"/>
<evidence type="ECO:0000250" key="1">
    <source>
        <dbReference type="UniProtKB" id="P03901"/>
    </source>
</evidence>
<evidence type="ECO:0000250" key="2">
    <source>
        <dbReference type="UniProtKB" id="P03902"/>
    </source>
</evidence>
<evidence type="ECO:0000255" key="3"/>
<evidence type="ECO:0000305" key="4"/>
<accession>Q94Y87</accession>
<reference key="1">
    <citation type="journal article" date="2002" name="J. Hum. Evol.">
        <title>Phylogenetic relationships among Lemuridae (Primates): evidence from mtDNA.</title>
        <authorList>
            <person name="Pastorini J."/>
            <person name="Forstner M.R."/>
            <person name="Martin R.D."/>
        </authorList>
    </citation>
    <scope>NUCLEOTIDE SEQUENCE [GENOMIC DNA]</scope>
    <source>
        <strain>Isolate JP3</strain>
    </source>
</reference>
<reference key="2">
    <citation type="journal article" date="2003" name="Proc. Natl. Acad. Sci. U.S.A.">
        <title>A molecular approach to comparative phylogeography of extant Malagasy lemurs.</title>
        <authorList>
            <person name="Pastorini J."/>
            <person name="Thalmann U."/>
            <person name="Martin R.D."/>
        </authorList>
    </citation>
    <scope>NUCLEOTIDE SEQUENCE [GENOMIC DNA]</scope>
    <source>
        <strain>Isolate JP3</strain>
        <strain>Isolate JP52</strain>
    </source>
</reference>
<reference key="3">
    <citation type="journal article" date="2002" name="Proc. Natl. Acad. Sci. U.S.A.">
        <title>Mammalian mitogenomic relationships and the root of the eutherian tree.</title>
        <authorList>
            <person name="Arnason U."/>
            <person name="Adegoke J.A."/>
            <person name="Bodin K."/>
            <person name="Born E.W."/>
            <person name="Esa Y.B."/>
            <person name="Gullberg A."/>
            <person name="Nilsson M."/>
            <person name="Short R.V."/>
            <person name="Xu X."/>
            <person name="Janke A."/>
        </authorList>
    </citation>
    <scope>NUCLEOTIDE SEQUENCE [GENOMIC DNA]</scope>
</reference>
<protein>
    <recommendedName>
        <fullName>NADH-ubiquinone oxidoreductase chain 4L</fullName>
        <ecNumber>7.1.1.2</ecNumber>
    </recommendedName>
    <alternativeName>
        <fullName>NADH dehydrogenase subunit 4L</fullName>
    </alternativeName>
</protein>